<dbReference type="EC" id="4.1.1.11" evidence="1"/>
<dbReference type="EMBL" id="AE007870">
    <property type="protein sequence ID" value="AAK89734.1"/>
    <property type="molecule type" value="Genomic_DNA"/>
</dbReference>
<dbReference type="PIR" id="AI3007">
    <property type="entry name" value="AI3007"/>
</dbReference>
<dbReference type="PIR" id="D98276">
    <property type="entry name" value="D98276"/>
</dbReference>
<dbReference type="RefSeq" id="NP_356949.1">
    <property type="nucleotide sequence ID" value="NC_003063.2"/>
</dbReference>
<dbReference type="RefSeq" id="WP_010973232.1">
    <property type="nucleotide sequence ID" value="NC_003063.2"/>
</dbReference>
<dbReference type="SMR" id="Q8U9Q9"/>
<dbReference type="STRING" id="176299.Atu3667"/>
<dbReference type="EnsemblBacteria" id="AAK89734">
    <property type="protein sequence ID" value="AAK89734"/>
    <property type="gene ID" value="Atu3667"/>
</dbReference>
<dbReference type="GeneID" id="1135541"/>
<dbReference type="KEGG" id="atu:Atu3667"/>
<dbReference type="PATRIC" id="fig|176299.10.peg.3501"/>
<dbReference type="eggNOG" id="COG0853">
    <property type="taxonomic scope" value="Bacteria"/>
</dbReference>
<dbReference type="HOGENOM" id="CLU_115305_1_0_5"/>
<dbReference type="OrthoDB" id="9803983at2"/>
<dbReference type="PhylomeDB" id="Q8U9Q9"/>
<dbReference type="BioCyc" id="AGRO:ATU3667-MONOMER"/>
<dbReference type="UniPathway" id="UPA00028">
    <property type="reaction ID" value="UER00002"/>
</dbReference>
<dbReference type="Proteomes" id="UP000000813">
    <property type="component" value="Chromosome linear"/>
</dbReference>
<dbReference type="GO" id="GO:0005829">
    <property type="term" value="C:cytosol"/>
    <property type="evidence" value="ECO:0007669"/>
    <property type="project" value="TreeGrafter"/>
</dbReference>
<dbReference type="GO" id="GO:0004068">
    <property type="term" value="F:aspartate 1-decarboxylase activity"/>
    <property type="evidence" value="ECO:0007669"/>
    <property type="project" value="UniProtKB-UniRule"/>
</dbReference>
<dbReference type="GO" id="GO:0006523">
    <property type="term" value="P:alanine biosynthetic process"/>
    <property type="evidence" value="ECO:0007669"/>
    <property type="project" value="InterPro"/>
</dbReference>
<dbReference type="GO" id="GO:0015940">
    <property type="term" value="P:pantothenate biosynthetic process"/>
    <property type="evidence" value="ECO:0007669"/>
    <property type="project" value="UniProtKB-UniRule"/>
</dbReference>
<dbReference type="CDD" id="cd06919">
    <property type="entry name" value="Asp_decarbox"/>
    <property type="match status" value="1"/>
</dbReference>
<dbReference type="Gene3D" id="2.40.40.20">
    <property type="match status" value="1"/>
</dbReference>
<dbReference type="HAMAP" id="MF_00446">
    <property type="entry name" value="PanD"/>
    <property type="match status" value="1"/>
</dbReference>
<dbReference type="InterPro" id="IPR009010">
    <property type="entry name" value="Asp_de-COase-like_dom_sf"/>
</dbReference>
<dbReference type="InterPro" id="IPR003190">
    <property type="entry name" value="Asp_decarbox"/>
</dbReference>
<dbReference type="PANTHER" id="PTHR21012">
    <property type="entry name" value="ASPARTATE 1-DECARBOXYLASE"/>
    <property type="match status" value="1"/>
</dbReference>
<dbReference type="PANTHER" id="PTHR21012:SF0">
    <property type="entry name" value="ASPARTATE 1-DECARBOXYLASE"/>
    <property type="match status" value="1"/>
</dbReference>
<dbReference type="Pfam" id="PF02261">
    <property type="entry name" value="Asp_decarbox"/>
    <property type="match status" value="1"/>
</dbReference>
<dbReference type="SUPFAM" id="SSF50692">
    <property type="entry name" value="ADC-like"/>
    <property type="match status" value="1"/>
</dbReference>
<sequence length="155" mass="17101">MIRIVRAELHGITVTGADLDYHGSITLDPEHCDLAGIRPLEFVDIWNKQSGARISTYVIFGEAGSKCCILNGAAARTCQRGDQVIICSSSYVEETALYDTAPMVLTFTPKNDVKDVLRYRVKETARRPFDFFIETLPRAENSDVDDGSAADRAIA</sequence>
<name>PAND_AGRFC</name>
<accession>Q8U9Q9</accession>
<feature type="chain" id="PRO_0000023009" description="Aspartate 1-decarboxylase beta chain" evidence="1">
    <location>
        <begin position="1"/>
        <end position="23"/>
    </location>
</feature>
<feature type="chain" id="PRO_0000023010" description="Aspartate 1-decarboxylase alpha chain" evidence="1">
    <location>
        <begin position="24"/>
        <end position="155"/>
    </location>
</feature>
<feature type="active site" description="Schiff-base intermediate with substrate; via pyruvic acid" evidence="1">
    <location>
        <position position="24"/>
    </location>
</feature>
<feature type="active site" description="Proton donor" evidence="1">
    <location>
        <position position="57"/>
    </location>
</feature>
<feature type="binding site" evidence="1">
    <location>
        <position position="56"/>
    </location>
    <ligand>
        <name>substrate</name>
    </ligand>
</feature>
<feature type="binding site" evidence="1">
    <location>
        <begin position="72"/>
        <end position="74"/>
    </location>
    <ligand>
        <name>substrate</name>
    </ligand>
</feature>
<feature type="modified residue" description="Pyruvic acid (Ser)" evidence="1">
    <location>
        <position position="24"/>
    </location>
</feature>
<comment type="function">
    <text evidence="1">Catalyzes the pyruvoyl-dependent decarboxylation of aspartate to produce beta-alanine.</text>
</comment>
<comment type="catalytic activity">
    <reaction evidence="1">
        <text>L-aspartate + H(+) = beta-alanine + CO2</text>
        <dbReference type="Rhea" id="RHEA:19497"/>
        <dbReference type="ChEBI" id="CHEBI:15378"/>
        <dbReference type="ChEBI" id="CHEBI:16526"/>
        <dbReference type="ChEBI" id="CHEBI:29991"/>
        <dbReference type="ChEBI" id="CHEBI:57966"/>
        <dbReference type="EC" id="4.1.1.11"/>
    </reaction>
</comment>
<comment type="cofactor">
    <cofactor evidence="1">
        <name>pyruvate</name>
        <dbReference type="ChEBI" id="CHEBI:15361"/>
    </cofactor>
    <text evidence="1">Binds 1 pyruvoyl group covalently per subunit.</text>
</comment>
<comment type="pathway">
    <text evidence="1">Cofactor biosynthesis; (R)-pantothenate biosynthesis; beta-alanine from L-aspartate: step 1/1.</text>
</comment>
<comment type="subunit">
    <text evidence="1">Heterooctamer of four alpha and four beta subunits.</text>
</comment>
<comment type="subcellular location">
    <subcellularLocation>
        <location evidence="1">Cytoplasm</location>
    </subcellularLocation>
</comment>
<comment type="PTM">
    <text evidence="1">Is synthesized initially as an inactive proenzyme, which is activated by self-cleavage at a specific serine bond to produce a beta-subunit with a hydroxyl group at its C-terminus and an alpha-subunit with a pyruvoyl group at its N-terminus.</text>
</comment>
<comment type="similarity">
    <text evidence="1">Belongs to the PanD family.</text>
</comment>
<reference key="1">
    <citation type="journal article" date="2001" name="Science">
        <title>The genome of the natural genetic engineer Agrobacterium tumefaciens C58.</title>
        <authorList>
            <person name="Wood D.W."/>
            <person name="Setubal J.C."/>
            <person name="Kaul R."/>
            <person name="Monks D.E."/>
            <person name="Kitajima J.P."/>
            <person name="Okura V.K."/>
            <person name="Zhou Y."/>
            <person name="Chen L."/>
            <person name="Wood G.E."/>
            <person name="Almeida N.F. Jr."/>
            <person name="Woo L."/>
            <person name="Chen Y."/>
            <person name="Paulsen I.T."/>
            <person name="Eisen J.A."/>
            <person name="Karp P.D."/>
            <person name="Bovee D. Sr."/>
            <person name="Chapman P."/>
            <person name="Clendenning J."/>
            <person name="Deatherage G."/>
            <person name="Gillet W."/>
            <person name="Grant C."/>
            <person name="Kutyavin T."/>
            <person name="Levy R."/>
            <person name="Li M.-J."/>
            <person name="McClelland E."/>
            <person name="Palmieri A."/>
            <person name="Raymond C."/>
            <person name="Rouse G."/>
            <person name="Saenphimmachak C."/>
            <person name="Wu Z."/>
            <person name="Romero P."/>
            <person name="Gordon D."/>
            <person name="Zhang S."/>
            <person name="Yoo H."/>
            <person name="Tao Y."/>
            <person name="Biddle P."/>
            <person name="Jung M."/>
            <person name="Krespan W."/>
            <person name="Perry M."/>
            <person name="Gordon-Kamm B."/>
            <person name="Liao L."/>
            <person name="Kim S."/>
            <person name="Hendrick C."/>
            <person name="Zhao Z.-Y."/>
            <person name="Dolan M."/>
            <person name="Chumley F."/>
            <person name="Tingey S.V."/>
            <person name="Tomb J.-F."/>
            <person name="Gordon M.P."/>
            <person name="Olson M.V."/>
            <person name="Nester E.W."/>
        </authorList>
    </citation>
    <scope>NUCLEOTIDE SEQUENCE [LARGE SCALE GENOMIC DNA]</scope>
    <source>
        <strain>C58 / ATCC 33970</strain>
    </source>
</reference>
<reference key="2">
    <citation type="journal article" date="2001" name="Science">
        <title>Genome sequence of the plant pathogen and biotechnology agent Agrobacterium tumefaciens C58.</title>
        <authorList>
            <person name="Goodner B."/>
            <person name="Hinkle G."/>
            <person name="Gattung S."/>
            <person name="Miller N."/>
            <person name="Blanchard M."/>
            <person name="Qurollo B."/>
            <person name="Goldman B.S."/>
            <person name="Cao Y."/>
            <person name="Askenazi M."/>
            <person name="Halling C."/>
            <person name="Mullin L."/>
            <person name="Houmiel K."/>
            <person name="Gordon J."/>
            <person name="Vaudin M."/>
            <person name="Iartchouk O."/>
            <person name="Epp A."/>
            <person name="Liu F."/>
            <person name="Wollam C."/>
            <person name="Allinger M."/>
            <person name="Doughty D."/>
            <person name="Scott C."/>
            <person name="Lappas C."/>
            <person name="Markelz B."/>
            <person name="Flanagan C."/>
            <person name="Crowell C."/>
            <person name="Gurson J."/>
            <person name="Lomo C."/>
            <person name="Sear C."/>
            <person name="Strub G."/>
            <person name="Cielo C."/>
            <person name="Slater S."/>
        </authorList>
    </citation>
    <scope>NUCLEOTIDE SEQUENCE [LARGE SCALE GENOMIC DNA]</scope>
    <source>
        <strain>C58 / ATCC 33970</strain>
    </source>
</reference>
<protein>
    <recommendedName>
        <fullName evidence="1">Aspartate 1-decarboxylase</fullName>
        <ecNumber evidence="1">4.1.1.11</ecNumber>
    </recommendedName>
    <alternativeName>
        <fullName evidence="1">Aspartate alpha-decarboxylase</fullName>
    </alternativeName>
    <component>
        <recommendedName>
            <fullName evidence="1">Aspartate 1-decarboxylase beta chain</fullName>
        </recommendedName>
    </component>
    <component>
        <recommendedName>
            <fullName evidence="1">Aspartate 1-decarboxylase alpha chain</fullName>
        </recommendedName>
    </component>
</protein>
<evidence type="ECO:0000255" key="1">
    <source>
        <dbReference type="HAMAP-Rule" id="MF_00446"/>
    </source>
</evidence>
<organism>
    <name type="scientific">Agrobacterium fabrum (strain C58 / ATCC 33970)</name>
    <name type="common">Agrobacterium tumefaciens (strain C58)</name>
    <dbReference type="NCBI Taxonomy" id="176299"/>
    <lineage>
        <taxon>Bacteria</taxon>
        <taxon>Pseudomonadati</taxon>
        <taxon>Pseudomonadota</taxon>
        <taxon>Alphaproteobacteria</taxon>
        <taxon>Hyphomicrobiales</taxon>
        <taxon>Rhizobiaceae</taxon>
        <taxon>Rhizobium/Agrobacterium group</taxon>
        <taxon>Agrobacterium</taxon>
        <taxon>Agrobacterium tumefaciens complex</taxon>
    </lineage>
</organism>
<gene>
    <name evidence="1" type="primary">panD</name>
    <name type="ordered locus">Atu3667</name>
    <name type="ORF">AGR_L_2336</name>
</gene>
<keyword id="KW-0068">Autocatalytic cleavage</keyword>
<keyword id="KW-0963">Cytoplasm</keyword>
<keyword id="KW-0210">Decarboxylase</keyword>
<keyword id="KW-0456">Lyase</keyword>
<keyword id="KW-0566">Pantothenate biosynthesis</keyword>
<keyword id="KW-0670">Pyruvate</keyword>
<keyword id="KW-1185">Reference proteome</keyword>
<keyword id="KW-0704">Schiff base</keyword>
<keyword id="KW-0865">Zymogen</keyword>
<proteinExistence type="inferred from homology"/>